<evidence type="ECO:0000250" key="1">
    <source>
        <dbReference type="UniProtKB" id="Q8W1W9"/>
    </source>
</evidence>
<evidence type="ECO:0000269" key="2">
    <source>
    </source>
</evidence>
<evidence type="ECO:0000269" key="3">
    <source>
    </source>
</evidence>
<evidence type="ECO:0000303" key="4">
    <source>
    </source>
</evidence>
<evidence type="ECO:0000303" key="5">
    <source>
    </source>
</evidence>
<evidence type="ECO:0000305" key="6"/>
<evidence type="ECO:0000312" key="7">
    <source>
        <dbReference type="EMBL" id="BAC79154.1"/>
    </source>
</evidence>
<evidence type="ECO:0000312" key="8">
    <source>
        <dbReference type="EMBL" id="BAT09225.1"/>
    </source>
</evidence>
<accession>Q7XXN5</accession>
<feature type="chain" id="PRO_0000437758" description="Putrescine hydroxycinnamoyltransferase 3">
    <location>
        <begin position="1"/>
        <end position="437"/>
    </location>
</feature>
<feature type="active site" description="Proton acceptor" evidence="1">
    <location>
        <position position="151"/>
    </location>
</feature>
<feature type="active site" description="Proton acceptor" evidence="1">
    <location>
        <position position="383"/>
    </location>
</feature>
<comment type="function">
    <text evidence="3">Hydroxycinnamoyl transferase that catalyzes the transfer of an acyl from p-coumaryol-CoA to putrescine, to produce coumaroyl putrescine. Can use feruloyl-CoA and caffeoyl-CoA as acyl donors.</text>
</comment>
<comment type="biophysicochemical properties">
    <kinetics>
        <KM evidence="2">11.9 uM for p-coumaroyl-CoA</KM>
        <KM evidence="2">23.7 uM for feruloyl-CoA</KM>
        <KM evidence="2">80.8 uM for putrescine</KM>
    </kinetics>
</comment>
<comment type="tissue specificity">
    <text evidence="2">Highly expressed in roots. Expressed at low levels in shoots and flowers.</text>
</comment>
<comment type="similarity">
    <text evidence="6">Belongs to the plant acyltransferase family.</text>
</comment>
<sequence>MEVKVLSSKLVKPAYNGGVAAAPDVEYIPLSIFDKVTYKMQMAIIYAFPPPAPSTAAIEKGLAAVLAQYRAFAGQLGESPDGEAAVVLNDRGARLVEAAVDADLVDMAPAKPTPELLRLHPDLEGELQEVVLLQLTRFRCGSLAVGFTSNHVVADGHATSNFLVAWGRATRGLPMGAPPVHHHAALFKPRPSPHVEHDHRNREYYLPAAGDDSHGHGDGGAADNIVIHKAHFTKDFIAGLRAAASEGRGRPFSRFETILAHLWRTMTRARGLSPDEASTIRLSVDGRHRLGAPAEYFGNLVLWAFPRATVGDLLTRPLKHAAQVIHDEVARVDGAYFRSFLDFALSGAGGDKEGLAPSAVLKDVLCPNAEVDSWLTFPFYELDFGTGSPTYFMPSYFPTEGMLFLVPSYLGDGSVDAFVPVFNHNLEAFKECCYSME</sequence>
<reference key="1">
    <citation type="journal article" date="2005" name="Nature">
        <title>The map-based sequence of the rice genome.</title>
        <authorList>
            <consortium name="International rice genome sequencing project (IRGSP)"/>
        </authorList>
    </citation>
    <scope>NUCLEOTIDE SEQUENCE [LARGE SCALE GENOMIC DNA]</scope>
    <source>
        <strain>cv. Nipponbare</strain>
    </source>
</reference>
<reference key="2">
    <citation type="journal article" date="2008" name="Nucleic Acids Res.">
        <title>The rice annotation project database (RAP-DB): 2008 update.</title>
        <authorList>
            <consortium name="The rice annotation project (RAP)"/>
        </authorList>
    </citation>
    <scope>GENOME REANNOTATION</scope>
    <source>
        <strain>cv. Nipponbare</strain>
    </source>
</reference>
<reference key="3">
    <citation type="journal article" date="2013" name="Rice">
        <title>Improvement of the Oryza sativa Nipponbare reference genome using next generation sequence and optical map data.</title>
        <authorList>
            <person name="Kawahara Y."/>
            <person name="de la Bastide M."/>
            <person name="Hamilton J.P."/>
            <person name="Kanamori H."/>
            <person name="McCombie W.R."/>
            <person name="Ouyang S."/>
            <person name="Schwartz D.C."/>
            <person name="Tanaka T."/>
            <person name="Wu J."/>
            <person name="Zhou S."/>
            <person name="Childs K.L."/>
            <person name="Davidson R.M."/>
            <person name="Lin H."/>
            <person name="Quesada-Ocampo L."/>
            <person name="Vaillancourt B."/>
            <person name="Sakai H."/>
            <person name="Lee S.S."/>
            <person name="Kim J."/>
            <person name="Numa H."/>
            <person name="Itoh T."/>
            <person name="Buell C.R."/>
            <person name="Matsumoto T."/>
        </authorList>
    </citation>
    <scope>GENOME REANNOTATION</scope>
    <source>
        <strain>cv. Nipponbare</strain>
    </source>
</reference>
<reference key="4">
    <citation type="journal article" date="2003" name="Science">
        <title>Collection, mapping, and annotation of over 28,000 cDNA clones from japonica rice.</title>
        <authorList>
            <consortium name="The rice full-length cDNA consortium"/>
        </authorList>
    </citation>
    <scope>NUCLEOTIDE SEQUENCE [LARGE SCALE MRNA]</scope>
    <source>
        <strain>cv. Nipponbare</strain>
    </source>
</reference>
<reference key="5">
    <citation type="journal article" date="2016" name="J. Integr. Plant Biol.">
        <title>Molecular evidence for biochemical diversification of phenolamide biosynthesis in rice plants.</title>
        <authorList>
            <person name="Tanabe K."/>
            <person name="Hojo Y."/>
            <person name="Shinya T."/>
            <person name="Galis I."/>
        </authorList>
    </citation>
    <scope>FUNCTION</scope>
    <scope>BIOPHYSICOCHEMICAL PROPERTIES</scope>
    <scope>TISSUE SPECIFICITY</scope>
</reference>
<reference key="6">
    <citation type="journal article" date="2016" name="Plant Cell">
        <title>Evolutionarily distinct BAHD N-acyltransferases are responsible for natural variation of aromatic amine conjugates in rice.</title>
        <authorList>
            <person name="Peng M."/>
            <person name="Gao Y."/>
            <person name="Chen W."/>
            <person name="Wang W."/>
            <person name="Shen S."/>
            <person name="Shi J."/>
            <person name="Wang C."/>
            <person name="Zhang Y."/>
            <person name="Zou L."/>
            <person name="Wang S."/>
            <person name="Wan J."/>
            <person name="Liu X."/>
            <person name="Gong L."/>
            <person name="Luo J."/>
        </authorList>
    </citation>
    <scope>FUNCTION</scope>
    <scope>BIOPHYSICOCHEMICAL PROPERTIES</scope>
</reference>
<protein>
    <recommendedName>
        <fullName evidence="6">Putrescine hydroxycinnamoyltransferase 3</fullName>
        <shortName evidence="5">OsPHT3</shortName>
        <ecNumber evidence="6">2.3.1.-</ecNumber>
    </recommendedName>
</protein>
<organism>
    <name type="scientific">Oryza sativa subsp. japonica</name>
    <name type="common">Rice</name>
    <dbReference type="NCBI Taxonomy" id="39947"/>
    <lineage>
        <taxon>Eukaryota</taxon>
        <taxon>Viridiplantae</taxon>
        <taxon>Streptophyta</taxon>
        <taxon>Embryophyta</taxon>
        <taxon>Tracheophyta</taxon>
        <taxon>Spermatophyta</taxon>
        <taxon>Magnoliopsida</taxon>
        <taxon>Liliopsida</taxon>
        <taxon>Poales</taxon>
        <taxon>Poaceae</taxon>
        <taxon>BOP clade</taxon>
        <taxon>Oryzoideae</taxon>
        <taxon>Oryzeae</taxon>
        <taxon>Oryzinae</taxon>
        <taxon>Oryza</taxon>
        <taxon>Oryza sativa</taxon>
    </lineage>
</organism>
<gene>
    <name evidence="4" type="primary">PHT3</name>
    <name evidence="8" type="ordered locus">Os09g0543900</name>
    <name evidence="6" type="ordered locus">LOC_Os09g37180</name>
    <name evidence="7" type="ORF">P0705E11.3</name>
</gene>
<keyword id="KW-0012">Acyltransferase</keyword>
<keyword id="KW-1185">Reference proteome</keyword>
<keyword id="KW-0808">Transferase</keyword>
<proteinExistence type="evidence at protein level"/>
<dbReference type="EC" id="2.3.1.-" evidence="6"/>
<dbReference type="EMBL" id="AP006548">
    <property type="protein sequence ID" value="BAC79154.1"/>
    <property type="molecule type" value="Genomic_DNA"/>
</dbReference>
<dbReference type="EMBL" id="AP008215">
    <property type="protein sequence ID" value="BAF25742.1"/>
    <property type="molecule type" value="Genomic_DNA"/>
</dbReference>
<dbReference type="EMBL" id="AP014965">
    <property type="protein sequence ID" value="BAT09225.1"/>
    <property type="molecule type" value="Genomic_DNA"/>
</dbReference>
<dbReference type="EMBL" id="AK072013">
    <property type="protein sequence ID" value="BAG92784.1"/>
    <property type="molecule type" value="mRNA"/>
</dbReference>
<dbReference type="EMBL" id="AK109723">
    <property type="protein sequence ID" value="BAG98872.1"/>
    <property type="molecule type" value="mRNA"/>
</dbReference>
<dbReference type="RefSeq" id="XP_015651503.1">
    <property type="nucleotide sequence ID" value="XM_015796017.1"/>
</dbReference>
<dbReference type="SMR" id="Q7XXN5"/>
<dbReference type="FunCoup" id="Q7XXN5">
    <property type="interactions" value="2"/>
</dbReference>
<dbReference type="STRING" id="39947.Q7XXN5"/>
<dbReference type="PaxDb" id="39947-Q7XXN5"/>
<dbReference type="EnsemblPlants" id="Os09t0543900-01">
    <property type="protein sequence ID" value="Os09t0543900-01"/>
    <property type="gene ID" value="Os09g0543900"/>
</dbReference>
<dbReference type="EnsemblPlants" id="Os09t0543900-02">
    <property type="protein sequence ID" value="Os09t0543900-02"/>
    <property type="gene ID" value="Os09g0543900"/>
</dbReference>
<dbReference type="Gramene" id="Os09t0543900-01">
    <property type="protein sequence ID" value="Os09t0543900-01"/>
    <property type="gene ID" value="Os09g0543900"/>
</dbReference>
<dbReference type="Gramene" id="Os09t0543900-02">
    <property type="protein sequence ID" value="Os09t0543900-02"/>
    <property type="gene ID" value="Os09g0543900"/>
</dbReference>
<dbReference type="KEGG" id="dosa:Os09g0543900"/>
<dbReference type="eggNOG" id="ENOG502QTU2">
    <property type="taxonomic scope" value="Eukaryota"/>
</dbReference>
<dbReference type="HOGENOM" id="CLU_014546_6_2_1"/>
<dbReference type="InParanoid" id="Q7XXN5"/>
<dbReference type="OMA" id="KECCYAM"/>
<dbReference type="OrthoDB" id="671439at2759"/>
<dbReference type="Proteomes" id="UP000000763">
    <property type="component" value="Chromosome 9"/>
</dbReference>
<dbReference type="Proteomes" id="UP000059680">
    <property type="component" value="Chromosome 9"/>
</dbReference>
<dbReference type="ExpressionAtlas" id="Q7XXN5">
    <property type="expression patterns" value="baseline and differential"/>
</dbReference>
<dbReference type="GO" id="GO:0016747">
    <property type="term" value="F:acyltransferase activity, transferring groups other than amino-acyl groups"/>
    <property type="evidence" value="ECO:0000318"/>
    <property type="project" value="GO_Central"/>
</dbReference>
<dbReference type="GO" id="GO:0050734">
    <property type="term" value="F:hydroxycinnamoyltransferase activity"/>
    <property type="evidence" value="ECO:0000314"/>
    <property type="project" value="UniProtKB"/>
</dbReference>
<dbReference type="FunFam" id="3.30.559.10:FF:000008">
    <property type="entry name" value="Tryptamine hydroxycinnamoyl transferase"/>
    <property type="match status" value="1"/>
</dbReference>
<dbReference type="FunFam" id="3.30.559.10:FF:000014">
    <property type="entry name" value="Tryptamine hydroxycinnamoyl transferase"/>
    <property type="match status" value="1"/>
</dbReference>
<dbReference type="Gene3D" id="3.30.559.10">
    <property type="entry name" value="Chloramphenicol acetyltransferase-like domain"/>
    <property type="match status" value="2"/>
</dbReference>
<dbReference type="InterPro" id="IPR023213">
    <property type="entry name" value="CAT-like_dom_sf"/>
</dbReference>
<dbReference type="InterPro" id="IPR050317">
    <property type="entry name" value="Plant_Fungal_Acyltransferase"/>
</dbReference>
<dbReference type="PANTHER" id="PTHR31642:SF45">
    <property type="entry name" value="PUTRESCINE HYDROXYCINNAMOYLTRANSFERASE 3"/>
    <property type="match status" value="1"/>
</dbReference>
<dbReference type="PANTHER" id="PTHR31642">
    <property type="entry name" value="TRICHOTHECENE 3-O-ACETYLTRANSFERASE"/>
    <property type="match status" value="1"/>
</dbReference>
<dbReference type="Pfam" id="PF02458">
    <property type="entry name" value="Transferase"/>
    <property type="match status" value="1"/>
</dbReference>
<name>PHT3_ORYSJ</name>